<organism>
    <name type="scientific">Listeria monocytogenes serovar 1/2a (strain ATCC BAA-679 / EGD-e)</name>
    <dbReference type="NCBI Taxonomy" id="169963"/>
    <lineage>
        <taxon>Bacteria</taxon>
        <taxon>Bacillati</taxon>
        <taxon>Bacillota</taxon>
        <taxon>Bacilli</taxon>
        <taxon>Bacillales</taxon>
        <taxon>Listeriaceae</taxon>
        <taxon>Listeria</taxon>
    </lineage>
</organism>
<comment type="function">
    <text evidence="1">Joins adenosylcobinamide-GDP and alpha-ribazole to generate adenosylcobalamin (Ado-cobalamin). Also synthesizes adenosylcobalamin 5'-phosphate from adenosylcobinamide-GDP and alpha-ribazole 5'-phosphate.</text>
</comment>
<comment type="catalytic activity">
    <reaction evidence="1">
        <text>alpha-ribazole + adenosylcob(III)inamide-GDP = adenosylcob(III)alamin + GMP + H(+)</text>
        <dbReference type="Rhea" id="RHEA:16049"/>
        <dbReference type="ChEBI" id="CHEBI:10329"/>
        <dbReference type="ChEBI" id="CHEBI:15378"/>
        <dbReference type="ChEBI" id="CHEBI:18408"/>
        <dbReference type="ChEBI" id="CHEBI:58115"/>
        <dbReference type="ChEBI" id="CHEBI:60487"/>
        <dbReference type="EC" id="2.7.8.26"/>
    </reaction>
</comment>
<comment type="catalytic activity">
    <reaction evidence="1">
        <text>alpha-ribazole 5'-phosphate + adenosylcob(III)inamide-GDP = adenosylcob(III)alamin 5'-phosphate + GMP + H(+)</text>
        <dbReference type="Rhea" id="RHEA:23560"/>
        <dbReference type="ChEBI" id="CHEBI:15378"/>
        <dbReference type="ChEBI" id="CHEBI:57918"/>
        <dbReference type="ChEBI" id="CHEBI:58115"/>
        <dbReference type="ChEBI" id="CHEBI:60487"/>
        <dbReference type="ChEBI" id="CHEBI:60493"/>
        <dbReference type="EC" id="2.7.8.26"/>
    </reaction>
</comment>
<comment type="cofactor">
    <cofactor evidence="1">
        <name>Mg(2+)</name>
        <dbReference type="ChEBI" id="CHEBI:18420"/>
    </cofactor>
</comment>
<comment type="pathway">
    <text evidence="1">Cofactor biosynthesis; adenosylcobalamin biosynthesis; adenosylcobalamin from cob(II)yrinate a,c-diamide: step 7/7.</text>
</comment>
<comment type="subcellular location">
    <subcellularLocation>
        <location evidence="1">Cell membrane</location>
        <topology evidence="1">Multi-pass membrane protein</topology>
    </subcellularLocation>
</comment>
<comment type="similarity">
    <text evidence="1">Belongs to the CobS family.</text>
</comment>
<sequence length="248" mass="27215">MKTLILLIQFFTRIPLPIQINMDEINLKKGSALLPFVGVIIGAWNWLIFTLVALVMPLPVAIIAGLFAEVIITGGFHVDALADTADGLFSSRKRERMLEIMKDSRVGANGVIAICFYFLFYGALFLSVTDTQQICWLFFVLPIVAKGVTMLLFAKMTYAGSKEGLGSIFLGVPWWPIVIAQVIVLAVLGLFFSYVGVIAYVGVILFTIIYRAFVYKRIGGMNGDTLGAGGQMGQLICLFCLVLLWGLV</sequence>
<evidence type="ECO:0000255" key="1">
    <source>
        <dbReference type="HAMAP-Rule" id="MF_00719"/>
    </source>
</evidence>
<protein>
    <recommendedName>
        <fullName evidence="1">Adenosylcobinamide-GDP ribazoletransferase</fullName>
        <ecNumber evidence="1">2.7.8.26</ecNumber>
    </recommendedName>
    <alternativeName>
        <fullName evidence="1">Cobalamin synthase</fullName>
    </alternativeName>
    <alternativeName>
        <fullName evidence="1">Cobalamin-5'-phosphate synthase</fullName>
    </alternativeName>
</protein>
<reference key="1">
    <citation type="journal article" date="2001" name="Science">
        <title>Comparative genomics of Listeria species.</title>
        <authorList>
            <person name="Glaser P."/>
            <person name="Frangeul L."/>
            <person name="Buchrieser C."/>
            <person name="Rusniok C."/>
            <person name="Amend A."/>
            <person name="Baquero F."/>
            <person name="Berche P."/>
            <person name="Bloecker H."/>
            <person name="Brandt P."/>
            <person name="Chakraborty T."/>
            <person name="Charbit A."/>
            <person name="Chetouani F."/>
            <person name="Couve E."/>
            <person name="de Daruvar A."/>
            <person name="Dehoux P."/>
            <person name="Domann E."/>
            <person name="Dominguez-Bernal G."/>
            <person name="Duchaud E."/>
            <person name="Durant L."/>
            <person name="Dussurget O."/>
            <person name="Entian K.-D."/>
            <person name="Fsihi H."/>
            <person name="Garcia-del Portillo F."/>
            <person name="Garrido P."/>
            <person name="Gautier L."/>
            <person name="Goebel W."/>
            <person name="Gomez-Lopez N."/>
            <person name="Hain T."/>
            <person name="Hauf J."/>
            <person name="Jackson D."/>
            <person name="Jones L.-M."/>
            <person name="Kaerst U."/>
            <person name="Kreft J."/>
            <person name="Kuhn M."/>
            <person name="Kunst F."/>
            <person name="Kurapkat G."/>
            <person name="Madueno E."/>
            <person name="Maitournam A."/>
            <person name="Mata Vicente J."/>
            <person name="Ng E."/>
            <person name="Nedjari H."/>
            <person name="Nordsiek G."/>
            <person name="Novella S."/>
            <person name="de Pablos B."/>
            <person name="Perez-Diaz J.-C."/>
            <person name="Purcell R."/>
            <person name="Remmel B."/>
            <person name="Rose M."/>
            <person name="Schlueter T."/>
            <person name="Simoes N."/>
            <person name="Tierrez A."/>
            <person name="Vazquez-Boland J.-A."/>
            <person name="Voss H."/>
            <person name="Wehland J."/>
            <person name="Cossart P."/>
        </authorList>
    </citation>
    <scope>NUCLEOTIDE SEQUENCE [LARGE SCALE GENOMIC DNA]</scope>
    <source>
        <strain>ATCC BAA-679 / EGD-e</strain>
    </source>
</reference>
<name>COBS_LISMO</name>
<dbReference type="EC" id="2.7.8.26" evidence="1"/>
<dbReference type="EMBL" id="AL591978">
    <property type="protein sequence ID" value="CAC99226.1"/>
    <property type="molecule type" value="Genomic_DNA"/>
</dbReference>
<dbReference type="PIR" id="AD1218">
    <property type="entry name" value="AD1218"/>
</dbReference>
<dbReference type="RefSeq" id="NP_464673.1">
    <property type="nucleotide sequence ID" value="NC_003210.1"/>
</dbReference>
<dbReference type="RefSeq" id="WP_010989692.1">
    <property type="nucleotide sequence ID" value="NZ_CP149495.1"/>
</dbReference>
<dbReference type="STRING" id="169963.gene:17593804"/>
<dbReference type="PaxDb" id="169963-lmo1148"/>
<dbReference type="EnsemblBacteria" id="CAC99226">
    <property type="protein sequence ID" value="CAC99226"/>
    <property type="gene ID" value="CAC99226"/>
</dbReference>
<dbReference type="GeneID" id="986158"/>
<dbReference type="KEGG" id="lmo:lmo1148"/>
<dbReference type="PATRIC" id="fig|169963.11.peg.1179"/>
<dbReference type="eggNOG" id="COG0368">
    <property type="taxonomic scope" value="Bacteria"/>
</dbReference>
<dbReference type="HOGENOM" id="CLU_057426_1_2_9"/>
<dbReference type="OrthoDB" id="9794626at2"/>
<dbReference type="PhylomeDB" id="Q8Y7X1"/>
<dbReference type="BioCyc" id="LMON169963:LMO1148-MONOMER"/>
<dbReference type="UniPathway" id="UPA00148">
    <property type="reaction ID" value="UER00238"/>
</dbReference>
<dbReference type="Proteomes" id="UP000000817">
    <property type="component" value="Chromosome"/>
</dbReference>
<dbReference type="GO" id="GO:0005886">
    <property type="term" value="C:plasma membrane"/>
    <property type="evidence" value="ECO:0007669"/>
    <property type="project" value="UniProtKB-SubCell"/>
</dbReference>
<dbReference type="GO" id="GO:0051073">
    <property type="term" value="F:adenosylcobinamide-GDP ribazoletransferase activity"/>
    <property type="evidence" value="ECO:0007669"/>
    <property type="project" value="UniProtKB-UniRule"/>
</dbReference>
<dbReference type="GO" id="GO:0008818">
    <property type="term" value="F:cobalamin 5'-phosphate synthase activity"/>
    <property type="evidence" value="ECO:0007669"/>
    <property type="project" value="UniProtKB-UniRule"/>
</dbReference>
<dbReference type="GO" id="GO:0009236">
    <property type="term" value="P:cobalamin biosynthetic process"/>
    <property type="evidence" value="ECO:0000318"/>
    <property type="project" value="GO_Central"/>
</dbReference>
<dbReference type="HAMAP" id="MF_00719">
    <property type="entry name" value="CobS"/>
    <property type="match status" value="1"/>
</dbReference>
<dbReference type="InterPro" id="IPR003805">
    <property type="entry name" value="CobS"/>
</dbReference>
<dbReference type="NCBIfam" id="TIGR00317">
    <property type="entry name" value="cobS"/>
    <property type="match status" value="1"/>
</dbReference>
<dbReference type="PANTHER" id="PTHR34148">
    <property type="entry name" value="ADENOSYLCOBINAMIDE-GDP RIBAZOLETRANSFERASE"/>
    <property type="match status" value="1"/>
</dbReference>
<dbReference type="PANTHER" id="PTHR34148:SF1">
    <property type="entry name" value="ADENOSYLCOBINAMIDE-GDP RIBAZOLETRANSFERASE"/>
    <property type="match status" value="1"/>
</dbReference>
<dbReference type="Pfam" id="PF02654">
    <property type="entry name" value="CobS"/>
    <property type="match status" value="1"/>
</dbReference>
<keyword id="KW-1003">Cell membrane</keyword>
<keyword id="KW-0169">Cobalamin biosynthesis</keyword>
<keyword id="KW-0460">Magnesium</keyword>
<keyword id="KW-0472">Membrane</keyword>
<keyword id="KW-1185">Reference proteome</keyword>
<keyword id="KW-0808">Transferase</keyword>
<keyword id="KW-0812">Transmembrane</keyword>
<keyword id="KW-1133">Transmembrane helix</keyword>
<accession>Q8Y7X1</accession>
<gene>
    <name evidence="1" type="primary">cobS</name>
    <name type="ordered locus">lmo1148</name>
</gene>
<feature type="chain" id="PRO_0000146884" description="Adenosylcobinamide-GDP ribazoletransferase">
    <location>
        <begin position="1"/>
        <end position="248"/>
    </location>
</feature>
<feature type="transmembrane region" description="Helical" evidence="1">
    <location>
        <begin position="24"/>
        <end position="44"/>
    </location>
</feature>
<feature type="transmembrane region" description="Helical" evidence="1">
    <location>
        <begin position="70"/>
        <end position="90"/>
    </location>
</feature>
<feature type="transmembrane region" description="Helical" evidence="1">
    <location>
        <begin position="106"/>
        <end position="126"/>
    </location>
</feature>
<feature type="transmembrane region" description="Helical" evidence="1">
    <location>
        <begin position="134"/>
        <end position="154"/>
    </location>
</feature>
<feature type="transmembrane region" description="Helical" evidence="1">
    <location>
        <begin position="168"/>
        <end position="188"/>
    </location>
</feature>
<feature type="transmembrane region" description="Helical" evidence="1">
    <location>
        <begin position="189"/>
        <end position="209"/>
    </location>
</feature>
<feature type="transmembrane region" description="Helical" evidence="1">
    <location>
        <begin position="228"/>
        <end position="248"/>
    </location>
</feature>
<proteinExistence type="inferred from homology"/>